<feature type="chain" id="PRO_0000184923" description="3-methyl-2-oxobutanoate hydroxymethyltransferase">
    <location>
        <begin position="1"/>
        <end position="267"/>
    </location>
</feature>
<feature type="active site" description="Proton acceptor" evidence="1">
    <location>
        <position position="182"/>
    </location>
</feature>
<feature type="binding site" evidence="1">
    <location>
        <begin position="45"/>
        <end position="46"/>
    </location>
    <ligand>
        <name>3-methyl-2-oxobutanoate</name>
        <dbReference type="ChEBI" id="CHEBI:11851"/>
    </ligand>
</feature>
<feature type="binding site" evidence="1">
    <location>
        <position position="45"/>
    </location>
    <ligand>
        <name>Mg(2+)</name>
        <dbReference type="ChEBI" id="CHEBI:18420"/>
    </ligand>
</feature>
<feature type="binding site" evidence="1">
    <location>
        <position position="84"/>
    </location>
    <ligand>
        <name>3-methyl-2-oxobutanoate</name>
        <dbReference type="ChEBI" id="CHEBI:11851"/>
    </ligand>
</feature>
<feature type="binding site" evidence="1">
    <location>
        <position position="84"/>
    </location>
    <ligand>
        <name>Mg(2+)</name>
        <dbReference type="ChEBI" id="CHEBI:18420"/>
    </ligand>
</feature>
<feature type="binding site" evidence="1">
    <location>
        <position position="113"/>
    </location>
    <ligand>
        <name>3-methyl-2-oxobutanoate</name>
        <dbReference type="ChEBI" id="CHEBI:11851"/>
    </ligand>
</feature>
<feature type="binding site" evidence="1">
    <location>
        <position position="115"/>
    </location>
    <ligand>
        <name>Mg(2+)</name>
        <dbReference type="ChEBI" id="CHEBI:18420"/>
    </ligand>
</feature>
<evidence type="ECO:0000255" key="1">
    <source>
        <dbReference type="HAMAP-Rule" id="MF_00156"/>
    </source>
</evidence>
<proteinExistence type="inferred from homology"/>
<reference key="1">
    <citation type="journal article" date="2001" name="Proc. Natl. Acad. Sci. U.S.A.">
        <title>The complete genome of the crenarchaeon Sulfolobus solfataricus P2.</title>
        <authorList>
            <person name="She Q."/>
            <person name="Singh R.K."/>
            <person name="Confalonieri F."/>
            <person name="Zivanovic Y."/>
            <person name="Allard G."/>
            <person name="Awayez M.J."/>
            <person name="Chan-Weiher C.C.-Y."/>
            <person name="Clausen I.G."/>
            <person name="Curtis B.A."/>
            <person name="De Moors A."/>
            <person name="Erauso G."/>
            <person name="Fletcher C."/>
            <person name="Gordon P.M.K."/>
            <person name="Heikamp-de Jong I."/>
            <person name="Jeffries A.C."/>
            <person name="Kozera C.J."/>
            <person name="Medina N."/>
            <person name="Peng X."/>
            <person name="Thi-Ngoc H.P."/>
            <person name="Redder P."/>
            <person name="Schenk M.E."/>
            <person name="Theriault C."/>
            <person name="Tolstrup N."/>
            <person name="Charlebois R.L."/>
            <person name="Doolittle W.F."/>
            <person name="Duguet M."/>
            <person name="Gaasterland T."/>
            <person name="Garrett R.A."/>
            <person name="Ragan M.A."/>
            <person name="Sensen C.W."/>
            <person name="Van der Oost J."/>
        </authorList>
    </citation>
    <scope>NUCLEOTIDE SEQUENCE [LARGE SCALE GENOMIC DNA]</scope>
    <source>
        <strain>ATCC 35092 / DSM 1617 / JCM 11322 / P2</strain>
    </source>
</reference>
<keyword id="KW-0173">Coenzyme A biosynthesis</keyword>
<keyword id="KW-0963">Cytoplasm</keyword>
<keyword id="KW-0460">Magnesium</keyword>
<keyword id="KW-0479">Metal-binding</keyword>
<keyword id="KW-1185">Reference proteome</keyword>
<keyword id="KW-0808">Transferase</keyword>
<name>PANB_SACS2</name>
<sequence length="267" mass="29624">MKKVTIRDFIKKKSMKEKITMLTAYDYPTAKIISNTTLDSILVGDSLGMVVLGYTNTLNVTMRDMISHTRAVARANPPQLIVSDMPFLSYEIDVKSAVKNAGLLVKAGSDAVKLEGGEEIKDIIRAIVKAGIPVMGHIGLTPQRFLRLGGFRTIGKTKQEEEQLIKDSLELEDAGVFSIVIENTYVDIAKRITEKLNVPTICIGAGPYCDGQVLVIHDLLGLSEVTPYFAKSYVNLKEIISSAINQYIIDVKTNKFPEKQHYKERES</sequence>
<organism>
    <name type="scientific">Saccharolobus solfataricus (strain ATCC 35092 / DSM 1617 / JCM 11322 / P2)</name>
    <name type="common">Sulfolobus solfataricus</name>
    <dbReference type="NCBI Taxonomy" id="273057"/>
    <lineage>
        <taxon>Archaea</taxon>
        <taxon>Thermoproteota</taxon>
        <taxon>Thermoprotei</taxon>
        <taxon>Sulfolobales</taxon>
        <taxon>Sulfolobaceae</taxon>
        <taxon>Saccharolobus</taxon>
    </lineage>
</organism>
<gene>
    <name evidence="1" type="primary">panB</name>
    <name type="ordered locus">SSO2400</name>
</gene>
<accession>Q97W44</accession>
<dbReference type="EC" id="2.1.2.11" evidence="1"/>
<dbReference type="EMBL" id="AE006641">
    <property type="protein sequence ID" value="AAK42546.1"/>
    <property type="molecule type" value="Genomic_DNA"/>
</dbReference>
<dbReference type="PIR" id="C90411">
    <property type="entry name" value="C90411"/>
</dbReference>
<dbReference type="RefSeq" id="WP_009989439.1">
    <property type="nucleotide sequence ID" value="NC_002754.1"/>
</dbReference>
<dbReference type="SMR" id="Q97W44"/>
<dbReference type="FunCoup" id="Q97W44">
    <property type="interactions" value="129"/>
</dbReference>
<dbReference type="STRING" id="273057.SSO2400"/>
<dbReference type="PaxDb" id="273057-SSO2400"/>
<dbReference type="EnsemblBacteria" id="AAK42546">
    <property type="protein sequence ID" value="AAK42546"/>
    <property type="gene ID" value="SSO2400"/>
</dbReference>
<dbReference type="GeneID" id="44128121"/>
<dbReference type="KEGG" id="sso:SSO2400"/>
<dbReference type="PATRIC" id="fig|273057.12.peg.2481"/>
<dbReference type="eggNOG" id="arCOG00584">
    <property type="taxonomic scope" value="Archaea"/>
</dbReference>
<dbReference type="HOGENOM" id="CLU_036645_1_0_2"/>
<dbReference type="InParanoid" id="Q97W44"/>
<dbReference type="PhylomeDB" id="Q97W44"/>
<dbReference type="UniPathway" id="UPA00241"/>
<dbReference type="Proteomes" id="UP000001974">
    <property type="component" value="Chromosome"/>
</dbReference>
<dbReference type="GO" id="GO:0005737">
    <property type="term" value="C:cytoplasm"/>
    <property type="evidence" value="ECO:0007669"/>
    <property type="project" value="UniProtKB-SubCell"/>
</dbReference>
<dbReference type="GO" id="GO:0003864">
    <property type="term" value="F:3-methyl-2-oxobutanoate hydroxymethyltransferase activity"/>
    <property type="evidence" value="ECO:0000318"/>
    <property type="project" value="GO_Central"/>
</dbReference>
<dbReference type="GO" id="GO:0000287">
    <property type="term" value="F:magnesium ion binding"/>
    <property type="evidence" value="ECO:0000318"/>
    <property type="project" value="GO_Central"/>
</dbReference>
<dbReference type="GO" id="GO:0015937">
    <property type="term" value="P:coenzyme A biosynthetic process"/>
    <property type="evidence" value="ECO:0007669"/>
    <property type="project" value="UniProtKB-UniRule"/>
</dbReference>
<dbReference type="GO" id="GO:0015940">
    <property type="term" value="P:pantothenate biosynthetic process"/>
    <property type="evidence" value="ECO:0000318"/>
    <property type="project" value="GO_Central"/>
</dbReference>
<dbReference type="CDD" id="cd06557">
    <property type="entry name" value="KPHMT-like"/>
    <property type="match status" value="1"/>
</dbReference>
<dbReference type="FunFam" id="3.20.20.60:FF:000052">
    <property type="entry name" value="3-methyl-2-oxobutanoate hydroxymethyltransferase"/>
    <property type="match status" value="1"/>
</dbReference>
<dbReference type="Gene3D" id="3.20.20.60">
    <property type="entry name" value="Phosphoenolpyruvate-binding domains"/>
    <property type="match status" value="1"/>
</dbReference>
<dbReference type="HAMAP" id="MF_00156">
    <property type="entry name" value="PanB"/>
    <property type="match status" value="1"/>
</dbReference>
<dbReference type="InterPro" id="IPR003700">
    <property type="entry name" value="Pantoate_hydroxy_MeTrfase"/>
</dbReference>
<dbReference type="InterPro" id="IPR015813">
    <property type="entry name" value="Pyrv/PenolPyrv_kinase-like_dom"/>
</dbReference>
<dbReference type="InterPro" id="IPR040442">
    <property type="entry name" value="Pyrv_kinase-like_dom_sf"/>
</dbReference>
<dbReference type="NCBIfam" id="TIGR00222">
    <property type="entry name" value="panB"/>
    <property type="match status" value="1"/>
</dbReference>
<dbReference type="NCBIfam" id="NF001452">
    <property type="entry name" value="PRK00311.1"/>
    <property type="match status" value="1"/>
</dbReference>
<dbReference type="PANTHER" id="PTHR20881">
    <property type="entry name" value="3-METHYL-2-OXOBUTANOATE HYDROXYMETHYLTRANSFERASE"/>
    <property type="match status" value="1"/>
</dbReference>
<dbReference type="PANTHER" id="PTHR20881:SF0">
    <property type="entry name" value="3-METHYL-2-OXOBUTANOATE HYDROXYMETHYLTRANSFERASE"/>
    <property type="match status" value="1"/>
</dbReference>
<dbReference type="Pfam" id="PF02548">
    <property type="entry name" value="Pantoate_transf"/>
    <property type="match status" value="1"/>
</dbReference>
<dbReference type="PIRSF" id="PIRSF000388">
    <property type="entry name" value="Pantoate_hydroxy_MeTrfase"/>
    <property type="match status" value="1"/>
</dbReference>
<dbReference type="SUPFAM" id="SSF51621">
    <property type="entry name" value="Phosphoenolpyruvate/pyruvate domain"/>
    <property type="match status" value="1"/>
</dbReference>
<protein>
    <recommendedName>
        <fullName evidence="1">3-methyl-2-oxobutanoate hydroxymethyltransferase</fullName>
        <ecNumber evidence="1">2.1.2.11</ecNumber>
    </recommendedName>
    <alternativeName>
        <fullName evidence="1">Ketopantoate hydroxymethyltransferase</fullName>
        <shortName evidence="1">KPHMT</shortName>
    </alternativeName>
</protein>
<comment type="function">
    <text evidence="1">Catalyzes the reversible reaction in which hydroxymethyl group from 5,10-methylenetetrahydrofolate is transferred onto alpha-ketoisovalerate to form ketopantoate.</text>
</comment>
<comment type="catalytic activity">
    <reaction evidence="1">
        <text>3-methyl-2-oxobutanoate + (6R)-5,10-methylene-5,6,7,8-tetrahydrofolate + H2O = 2-dehydropantoate + (6S)-5,6,7,8-tetrahydrofolate</text>
        <dbReference type="Rhea" id="RHEA:11824"/>
        <dbReference type="ChEBI" id="CHEBI:11561"/>
        <dbReference type="ChEBI" id="CHEBI:11851"/>
        <dbReference type="ChEBI" id="CHEBI:15377"/>
        <dbReference type="ChEBI" id="CHEBI:15636"/>
        <dbReference type="ChEBI" id="CHEBI:57453"/>
        <dbReference type="EC" id="2.1.2.11"/>
    </reaction>
</comment>
<comment type="cofactor">
    <cofactor evidence="1">
        <name>Mg(2+)</name>
        <dbReference type="ChEBI" id="CHEBI:18420"/>
    </cofactor>
    <text evidence="1">Binds 1 Mg(2+) ion per subunit.</text>
</comment>
<comment type="pathway">
    <text evidence="1">Cofactor biosynthesis; coenzyme A biosynthesis.</text>
</comment>
<comment type="subunit">
    <text evidence="1">Homodecamer; pentamer of dimers.</text>
</comment>
<comment type="subcellular location">
    <subcellularLocation>
        <location evidence="1">Cytoplasm</location>
    </subcellularLocation>
</comment>
<comment type="similarity">
    <text evidence="1">Belongs to the PanB family.</text>
</comment>